<comment type="function">
    <text>Probable glucose transporter.</text>
</comment>
<comment type="subcellular location">
    <subcellularLocation>
        <location>Membrane</location>
        <topology>Multi-pass membrane protein</topology>
    </subcellularLocation>
</comment>
<comment type="similarity">
    <text evidence="3">Belongs to the major facilitator superfamily. Sugar transporter (TC 2.A.1.1) family.</text>
</comment>
<protein>
    <recommendedName>
        <fullName>Hexose transporter HXT13</fullName>
    </recommendedName>
</protein>
<gene>
    <name type="primary">HXT13</name>
    <name type="synonym">HXT8</name>
    <name type="ordered locus">YEL069C</name>
</gene>
<reference key="1">
    <citation type="journal article" date="1997" name="Nature">
        <title>The nucleotide sequence of Saccharomyces cerevisiae chromosome V.</title>
        <authorList>
            <person name="Dietrich F.S."/>
            <person name="Mulligan J.T."/>
            <person name="Hennessy K.M."/>
            <person name="Yelton M.A."/>
            <person name="Allen E."/>
            <person name="Araujo R."/>
            <person name="Aviles E."/>
            <person name="Berno A."/>
            <person name="Brennan T."/>
            <person name="Carpenter J."/>
            <person name="Chen E."/>
            <person name="Cherry J.M."/>
            <person name="Chung E."/>
            <person name="Duncan M."/>
            <person name="Guzman E."/>
            <person name="Hartzell G."/>
            <person name="Hunicke-Smith S."/>
            <person name="Hyman R.W."/>
            <person name="Kayser A."/>
            <person name="Komp C."/>
            <person name="Lashkari D."/>
            <person name="Lew H."/>
            <person name="Lin D."/>
            <person name="Mosedale D."/>
            <person name="Nakahara K."/>
            <person name="Namath A."/>
            <person name="Norgren R."/>
            <person name="Oefner P."/>
            <person name="Oh C."/>
            <person name="Petel F.X."/>
            <person name="Roberts D."/>
            <person name="Sehl P."/>
            <person name="Schramm S."/>
            <person name="Shogren T."/>
            <person name="Smith V."/>
            <person name="Taylor P."/>
            <person name="Wei Y."/>
            <person name="Botstein D."/>
            <person name="Davis R.W."/>
        </authorList>
    </citation>
    <scope>NUCLEOTIDE SEQUENCE [LARGE SCALE GENOMIC DNA]</scope>
    <source>
        <strain>ATCC 204508 / S288c</strain>
    </source>
</reference>
<reference key="2">
    <citation type="journal article" date="2014" name="G3 (Bethesda)">
        <title>The reference genome sequence of Saccharomyces cerevisiae: Then and now.</title>
        <authorList>
            <person name="Engel S.R."/>
            <person name="Dietrich F.S."/>
            <person name="Fisk D.G."/>
            <person name="Binkley G."/>
            <person name="Balakrishnan R."/>
            <person name="Costanzo M.C."/>
            <person name="Dwight S.S."/>
            <person name="Hitz B.C."/>
            <person name="Karra K."/>
            <person name="Nash R.S."/>
            <person name="Weng S."/>
            <person name="Wong E.D."/>
            <person name="Lloyd P."/>
            <person name="Skrzypek M.S."/>
            <person name="Miyasato S.R."/>
            <person name="Simison M."/>
            <person name="Cherry J.M."/>
        </authorList>
    </citation>
    <scope>GENOME REANNOTATION</scope>
    <source>
        <strain>ATCC 204508 / S288c</strain>
    </source>
</reference>
<reference key="3">
    <citation type="journal article" date="2007" name="Genome Res.">
        <title>Approaching a complete repository of sequence-verified protein-encoding clones for Saccharomyces cerevisiae.</title>
        <authorList>
            <person name="Hu Y."/>
            <person name="Rolfs A."/>
            <person name="Bhullar B."/>
            <person name="Murthy T.V.S."/>
            <person name="Zhu C."/>
            <person name="Berger M.F."/>
            <person name="Camargo A.A."/>
            <person name="Kelley F."/>
            <person name="McCarron S."/>
            <person name="Jepson D."/>
            <person name="Richardson A."/>
            <person name="Raphael J."/>
            <person name="Moreira D."/>
            <person name="Taycher E."/>
            <person name="Zuo D."/>
            <person name="Mohr S."/>
            <person name="Kane M.F."/>
            <person name="Williamson J."/>
            <person name="Simpson A.J.G."/>
            <person name="Bulyk M.L."/>
            <person name="Harlow E."/>
            <person name="Marsischky G."/>
            <person name="Kolodner R.D."/>
            <person name="LaBaer J."/>
        </authorList>
    </citation>
    <scope>NUCLEOTIDE SEQUENCE [GENOMIC DNA]</scope>
    <source>
        <strain>ATCC 204508 / S288c</strain>
    </source>
</reference>
<reference key="4">
    <citation type="journal article" date="2006" name="Proc. Natl. Acad. Sci. U.S.A.">
        <title>A global topology map of the Saccharomyces cerevisiae membrane proteome.</title>
        <authorList>
            <person name="Kim H."/>
            <person name="Melen K."/>
            <person name="Oesterberg M."/>
            <person name="von Heijne G."/>
        </authorList>
    </citation>
    <scope>TOPOLOGY [LARGE SCALE ANALYSIS]</scope>
    <source>
        <strain>ATCC 208353 / W303-1A</strain>
    </source>
</reference>
<evidence type="ECO:0000255" key="1"/>
<evidence type="ECO:0000256" key="2">
    <source>
        <dbReference type="SAM" id="MobiDB-lite"/>
    </source>
</evidence>
<evidence type="ECO:0000305" key="3"/>
<name>HXT13_YEAST</name>
<accession>P39924</accession>
<accession>D3DLI2</accession>
<proteinExistence type="evidence at protein level"/>
<dbReference type="EMBL" id="U18795">
    <property type="protein sequence ID" value="AAB65018.1"/>
    <property type="molecule type" value="Genomic_DNA"/>
</dbReference>
<dbReference type="EMBL" id="AY723801">
    <property type="protein sequence ID" value="AAU09718.1"/>
    <property type="molecule type" value="Genomic_DNA"/>
</dbReference>
<dbReference type="EMBL" id="BK006939">
    <property type="protein sequence ID" value="DAA07586.1"/>
    <property type="molecule type" value="Genomic_DNA"/>
</dbReference>
<dbReference type="PIR" id="S50520">
    <property type="entry name" value="S50520"/>
</dbReference>
<dbReference type="RefSeq" id="NP_010845.1">
    <property type="nucleotide sequence ID" value="NM_001178884.1"/>
</dbReference>
<dbReference type="SMR" id="P39924"/>
<dbReference type="BioGRID" id="36662">
    <property type="interactions" value="61"/>
</dbReference>
<dbReference type="DIP" id="DIP-3943N"/>
<dbReference type="FunCoup" id="P39924">
    <property type="interactions" value="1483"/>
</dbReference>
<dbReference type="IntAct" id="P39924">
    <property type="interactions" value="1"/>
</dbReference>
<dbReference type="STRING" id="4932.YEL069C"/>
<dbReference type="TCDB" id="2.A.1.1.110">
    <property type="family name" value="the major facilitator superfamily (mfs)"/>
</dbReference>
<dbReference type="PaxDb" id="4932-YEL069C"/>
<dbReference type="PeptideAtlas" id="P39924"/>
<dbReference type="DNASU" id="856640"/>
<dbReference type="EnsemblFungi" id="YEL069C_mRNA">
    <property type="protein sequence ID" value="YEL069C"/>
    <property type="gene ID" value="YEL069C"/>
</dbReference>
<dbReference type="GeneID" id="856640"/>
<dbReference type="KEGG" id="sce:YEL069C"/>
<dbReference type="AGR" id="SGD:S000000795"/>
<dbReference type="SGD" id="S000000795">
    <property type="gene designation" value="HXT13"/>
</dbReference>
<dbReference type="VEuPathDB" id="FungiDB:YEL069C"/>
<dbReference type="eggNOG" id="KOG0254">
    <property type="taxonomic scope" value="Eukaryota"/>
</dbReference>
<dbReference type="GeneTree" id="ENSGT00940000176280"/>
<dbReference type="HOGENOM" id="CLU_001265_30_1_1"/>
<dbReference type="InParanoid" id="P39924"/>
<dbReference type="OMA" id="WFQWGLT"/>
<dbReference type="OrthoDB" id="2241241at2759"/>
<dbReference type="BioCyc" id="YEAST:G3O-30184-MONOMER"/>
<dbReference type="BioGRID-ORCS" id="856640">
    <property type="hits" value="0 hits in 10 CRISPR screens"/>
</dbReference>
<dbReference type="PRO" id="PR:P39924"/>
<dbReference type="Proteomes" id="UP000002311">
    <property type="component" value="Chromosome V"/>
</dbReference>
<dbReference type="RNAct" id="P39924">
    <property type="molecule type" value="protein"/>
</dbReference>
<dbReference type="GO" id="GO:0005783">
    <property type="term" value="C:endoplasmic reticulum"/>
    <property type="evidence" value="ECO:0007005"/>
    <property type="project" value="SGD"/>
</dbReference>
<dbReference type="GO" id="GO:0005886">
    <property type="term" value="C:plasma membrane"/>
    <property type="evidence" value="ECO:0000318"/>
    <property type="project" value="GO_Central"/>
</dbReference>
<dbReference type="GO" id="GO:0005351">
    <property type="term" value="F:carbohydrate:proton symporter activity"/>
    <property type="evidence" value="ECO:0000318"/>
    <property type="project" value="GO_Central"/>
</dbReference>
<dbReference type="GO" id="GO:0055056">
    <property type="term" value="F:D-glucose transmembrane transporter activity"/>
    <property type="evidence" value="ECO:0000315"/>
    <property type="project" value="SGD"/>
</dbReference>
<dbReference type="GO" id="GO:0005353">
    <property type="term" value="F:fructose transmembrane transporter activity"/>
    <property type="evidence" value="ECO:0000315"/>
    <property type="project" value="SGD"/>
</dbReference>
<dbReference type="GO" id="GO:0015578">
    <property type="term" value="F:mannose transmembrane transporter activity"/>
    <property type="evidence" value="ECO:0000315"/>
    <property type="project" value="SGD"/>
</dbReference>
<dbReference type="GO" id="GO:0008643">
    <property type="term" value="P:carbohydrate transport"/>
    <property type="evidence" value="ECO:0000318"/>
    <property type="project" value="GO_Central"/>
</dbReference>
<dbReference type="GO" id="GO:0008645">
    <property type="term" value="P:hexose transmembrane transport"/>
    <property type="evidence" value="ECO:0000315"/>
    <property type="project" value="SGD"/>
</dbReference>
<dbReference type="GO" id="GO:0015797">
    <property type="term" value="P:mannitol transmembrane transport"/>
    <property type="evidence" value="ECO:0000316"/>
    <property type="project" value="SGD"/>
</dbReference>
<dbReference type="GO" id="GO:0015795">
    <property type="term" value="P:sorbitol transmembrane transport"/>
    <property type="evidence" value="ECO:0000316"/>
    <property type="project" value="SGD"/>
</dbReference>
<dbReference type="CDD" id="cd17356">
    <property type="entry name" value="MFS_HXT"/>
    <property type="match status" value="1"/>
</dbReference>
<dbReference type="FunFam" id="1.20.1250.20:FF:000044">
    <property type="entry name" value="Hexose transporter Hxt3p"/>
    <property type="match status" value="1"/>
</dbReference>
<dbReference type="Gene3D" id="1.20.1250.20">
    <property type="entry name" value="MFS general substrate transporter like domains"/>
    <property type="match status" value="1"/>
</dbReference>
<dbReference type="InterPro" id="IPR020846">
    <property type="entry name" value="MFS_dom"/>
</dbReference>
<dbReference type="InterPro" id="IPR005828">
    <property type="entry name" value="MFS_sugar_transport-like"/>
</dbReference>
<dbReference type="InterPro" id="IPR050360">
    <property type="entry name" value="MFS_Sugar_Transporters"/>
</dbReference>
<dbReference type="InterPro" id="IPR036259">
    <property type="entry name" value="MFS_trans_sf"/>
</dbReference>
<dbReference type="InterPro" id="IPR003663">
    <property type="entry name" value="Sugar/inositol_transpt"/>
</dbReference>
<dbReference type="InterPro" id="IPR005829">
    <property type="entry name" value="Sugar_transporter_CS"/>
</dbReference>
<dbReference type="NCBIfam" id="TIGR00879">
    <property type="entry name" value="SP"/>
    <property type="match status" value="1"/>
</dbReference>
<dbReference type="PANTHER" id="PTHR48022:SF75">
    <property type="entry name" value="GALACTOSE TRANSPORTER-RELATED"/>
    <property type="match status" value="1"/>
</dbReference>
<dbReference type="PANTHER" id="PTHR48022">
    <property type="entry name" value="PLASTIDIC GLUCOSE TRANSPORTER 4"/>
    <property type="match status" value="1"/>
</dbReference>
<dbReference type="Pfam" id="PF00083">
    <property type="entry name" value="Sugar_tr"/>
    <property type="match status" value="1"/>
</dbReference>
<dbReference type="PRINTS" id="PR00171">
    <property type="entry name" value="SUGRTRNSPORT"/>
</dbReference>
<dbReference type="SUPFAM" id="SSF103473">
    <property type="entry name" value="MFS general substrate transporter"/>
    <property type="match status" value="1"/>
</dbReference>
<dbReference type="PROSITE" id="PS50850">
    <property type="entry name" value="MFS"/>
    <property type="match status" value="1"/>
</dbReference>
<dbReference type="PROSITE" id="PS00216">
    <property type="entry name" value="SUGAR_TRANSPORT_1"/>
    <property type="match status" value="1"/>
</dbReference>
<dbReference type="PROSITE" id="PS00217">
    <property type="entry name" value="SUGAR_TRANSPORT_2"/>
    <property type="match status" value="1"/>
</dbReference>
<feature type="chain" id="PRO_0000050402" description="Hexose transporter HXT13">
    <location>
        <begin position="1"/>
        <end position="564"/>
    </location>
</feature>
<feature type="topological domain" description="Cytoplasmic" evidence="1">
    <location>
        <begin position="1"/>
        <end position="52"/>
    </location>
</feature>
<feature type="transmembrane region" description="Helical; Name=1" evidence="1">
    <location>
        <begin position="53"/>
        <end position="73"/>
    </location>
</feature>
<feature type="topological domain" description="Extracellular" evidence="1">
    <location>
        <begin position="74"/>
        <end position="109"/>
    </location>
</feature>
<feature type="transmembrane region" description="Helical; Name=2" evidence="1">
    <location>
        <begin position="110"/>
        <end position="130"/>
    </location>
</feature>
<feature type="topological domain" description="Cytoplasmic" evidence="1">
    <location>
        <begin position="131"/>
        <end position="136"/>
    </location>
</feature>
<feature type="transmembrane region" description="Helical; Name=3" evidence="1">
    <location>
        <begin position="137"/>
        <end position="157"/>
    </location>
</feature>
<feature type="topological domain" description="Extracellular" evidence="1">
    <location>
        <begin position="158"/>
        <end position="167"/>
    </location>
</feature>
<feature type="transmembrane region" description="Helical; Name=4" evidence="1">
    <location>
        <begin position="168"/>
        <end position="188"/>
    </location>
</feature>
<feature type="topological domain" description="Cytoplasmic" evidence="1">
    <location>
        <begin position="189"/>
        <end position="194"/>
    </location>
</feature>
<feature type="transmembrane region" description="Helical; Name=5" evidence="1">
    <location>
        <begin position="195"/>
        <end position="215"/>
    </location>
</feature>
<feature type="topological domain" description="Extracellular" evidence="1">
    <location>
        <begin position="216"/>
        <end position="229"/>
    </location>
</feature>
<feature type="transmembrane region" description="Helical; Name=6" evidence="1">
    <location>
        <begin position="230"/>
        <end position="250"/>
    </location>
</feature>
<feature type="topological domain" description="Cytoplasmic" evidence="1">
    <location>
        <begin position="251"/>
        <end position="333"/>
    </location>
</feature>
<feature type="transmembrane region" description="Helical; Name=7" evidence="1">
    <location>
        <begin position="334"/>
        <end position="350"/>
    </location>
</feature>
<feature type="topological domain" description="Extracellular" evidence="1">
    <location>
        <begin position="351"/>
        <end position="356"/>
    </location>
</feature>
<feature type="transmembrane region" description="Helical; Name=8" evidence="1">
    <location>
        <begin position="357"/>
        <end position="374"/>
    </location>
</feature>
<feature type="topological domain" description="Cytoplasmic" evidence="1">
    <location>
        <begin position="375"/>
        <end position="381"/>
    </location>
</feature>
<feature type="transmembrane region" description="Helical; Name=9" evidence="1">
    <location>
        <begin position="382"/>
        <end position="402"/>
    </location>
</feature>
<feature type="topological domain" description="Extracellular" evidence="1">
    <location>
        <begin position="403"/>
        <end position="424"/>
    </location>
</feature>
<feature type="transmembrane region" description="Helical; Name=10" evidence="1">
    <location>
        <begin position="425"/>
        <end position="445"/>
    </location>
</feature>
<feature type="topological domain" description="Cytoplasmic" evidence="1">
    <location>
        <begin position="446"/>
        <end position="462"/>
    </location>
</feature>
<feature type="transmembrane region" description="Helical; Name=11" evidence="1">
    <location>
        <begin position="463"/>
        <end position="483"/>
    </location>
</feature>
<feature type="topological domain" description="Extracellular" evidence="1">
    <location>
        <position position="484"/>
    </location>
</feature>
<feature type="transmembrane region" description="Helical; Name=12" evidence="1">
    <location>
        <begin position="485"/>
        <end position="505"/>
    </location>
</feature>
<feature type="topological domain" description="Cytoplasmic" evidence="1">
    <location>
        <begin position="506"/>
        <end position="564"/>
    </location>
</feature>
<feature type="region of interest" description="Disordered" evidence="2">
    <location>
        <begin position="530"/>
        <end position="551"/>
    </location>
</feature>
<feature type="compositionally biased region" description="Basic and acidic residues" evidence="2">
    <location>
        <begin position="541"/>
        <end position="551"/>
    </location>
</feature>
<organism>
    <name type="scientific">Saccharomyces cerevisiae (strain ATCC 204508 / S288c)</name>
    <name type="common">Baker's yeast</name>
    <dbReference type="NCBI Taxonomy" id="559292"/>
    <lineage>
        <taxon>Eukaryota</taxon>
        <taxon>Fungi</taxon>
        <taxon>Dikarya</taxon>
        <taxon>Ascomycota</taxon>
        <taxon>Saccharomycotina</taxon>
        <taxon>Saccharomycetes</taxon>
        <taxon>Saccharomycetales</taxon>
        <taxon>Saccharomycetaceae</taxon>
        <taxon>Saccharomyces</taxon>
    </lineage>
</organism>
<keyword id="KW-0472">Membrane</keyword>
<keyword id="KW-1185">Reference proteome</keyword>
<keyword id="KW-0677">Repeat</keyword>
<keyword id="KW-0762">Sugar transport</keyword>
<keyword id="KW-0812">Transmembrane</keyword>
<keyword id="KW-1133">Transmembrane helix</keyword>
<keyword id="KW-0813">Transport</keyword>
<sequence length="564" mass="62734">MSSAQSSIDSDGDVRDADIHVAPPVEKEWSDGFDDNEVINGDNVEPPKRGLIGYLVIYLLCYPISFGGFLPGWDSGITAGFINMDNFKMNFGSYKHSTGEYYLSNVRMGLLVAMFSIGCAIGGLIFARLADTLGRRLAIVIVVLVYMVGAIIQISSNHKWYQYFVGKIIYGLGAGGCSVLCPMLLSEIAPTDLRGGLVSLYQLNMTFGIFLGYCSVYGTRKYDNTAQWRVPLGLCFLWALIIIIGMLLVPESPRYLIECERHEEARASIAKINKVSPEDPWVLKQADEINAGVLAQRELGEASWKELFSVKTKVLQRLITGILVQTFLQLTGENYFFFYGTTIFKSVGLTDGFETSIVLGTVNFFSTIIAVMVVDKIGRRKCLLFGAAGMMACMVIFASIGVKCLYPHGQDGPSSKGAGNAMIVFTCFYIFCFATTWAPVAYIVVAESFPSKVKSRAMSISTACNWLWQFLIGFFTPFITGSIHFYYGYVFVGCLVAMFLYVFFFLPETIGLSLEEIQLLYEEGIKPWKSASWVPPSRRGISSEESKTEKKDWKKFLKFSKNSD</sequence>